<gene>
    <name type="primary">LMBRD1</name>
    <name type="ORF">QnpA-16111</name>
</gene>
<proteinExistence type="evidence at transcript level"/>
<sequence length="540" mass="61501">MATPGAASAELVIGWCIFGLLLLAILAFCWIYVRKYQSRRESEVVSTITAIFSLAIALITSALLPVDIFLVSYMKNQNGTFKDWANANVSRQIEDTVLYGYYTLYSVILFCVFFWIPFVYFYYEEKDDDDTSKCTQIKTALKYTLGFVVICALLLLVGAFVPLNVPNNKNSTEWEKVKFLFEELGSSHGLAALSFSISSLTLIGMLAAITYTAYGMSALPLNLIKGTRSAAYERLENTEDIEEVEQHIQTIKSKSKDGRPLPARDKRALKQFEERLRTLKKRERHLEFIENSWWTKFCGALRPLKIIWGIFFILVALLFVISLFLSNLDKALHSAGIDSGFIIFGANLSNPLNMLLPLLQTVFPLDYILITIIIMYFIFTSMAGIRNIGIWFFWIRLYKIRRGRTRPQALLFLCMILLLIVLHTSYMIYSLAPQYVMYGSQNYLIETNITSDNHKGNSTLSVPKRCDADAPEDQCTVTRTYLFLHKFWFFSAAYYFGNWAFLGVFLIGLIVSCCKGKKSVIEGVDEDSDISDDEPSVYSV</sequence>
<organism>
    <name type="scientific">Macaca fascicularis</name>
    <name type="common">Crab-eating macaque</name>
    <name type="synonym">Cynomolgus monkey</name>
    <dbReference type="NCBI Taxonomy" id="9541"/>
    <lineage>
        <taxon>Eukaryota</taxon>
        <taxon>Metazoa</taxon>
        <taxon>Chordata</taxon>
        <taxon>Craniata</taxon>
        <taxon>Vertebrata</taxon>
        <taxon>Euteleostomi</taxon>
        <taxon>Mammalia</taxon>
        <taxon>Eutheria</taxon>
        <taxon>Euarchontoglires</taxon>
        <taxon>Primates</taxon>
        <taxon>Haplorrhini</taxon>
        <taxon>Catarrhini</taxon>
        <taxon>Cercopithecidae</taxon>
        <taxon>Cercopithecinae</taxon>
        <taxon>Macaca</taxon>
    </lineage>
</organism>
<protein>
    <recommendedName>
        <fullName evidence="2">Lysosomal cobalamin transport escort protein LMBD1</fullName>
        <shortName>LMBD1</shortName>
    </recommendedName>
    <alternativeName>
        <fullName>LMBR1 domain-containing protein 1</fullName>
    </alternativeName>
</protein>
<keyword id="KW-1003">Cell membrane</keyword>
<keyword id="KW-0846">Cobalamin</keyword>
<keyword id="KW-0170">Cobalt</keyword>
<keyword id="KW-0968">Cytoplasmic vesicle</keyword>
<keyword id="KW-0217">Developmental protein</keyword>
<keyword id="KW-0254">Endocytosis</keyword>
<keyword id="KW-0306">Gastrulation</keyword>
<keyword id="KW-0325">Glycoprotein</keyword>
<keyword id="KW-0458">Lysosome</keyword>
<keyword id="KW-0472">Membrane</keyword>
<keyword id="KW-0597">Phosphoprotein</keyword>
<keyword id="KW-1185">Reference proteome</keyword>
<keyword id="KW-0812">Transmembrane</keyword>
<keyword id="KW-1133">Transmembrane helix</keyword>
<keyword id="KW-0813">Transport</keyword>
<feature type="chain" id="PRO_0000260516" description="Lysosomal cobalamin transport escort protein LMBD1">
    <location>
        <begin position="1"/>
        <end position="540"/>
    </location>
</feature>
<feature type="topological domain" description="Extracellular" evidence="3">
    <location>
        <begin position="1"/>
        <end position="10"/>
    </location>
</feature>
<feature type="transmembrane region" description="Helical; Name=1" evidence="3">
    <location>
        <begin position="11"/>
        <end position="31"/>
    </location>
</feature>
<feature type="topological domain" description="Cytoplasmic" evidence="3">
    <location>
        <begin position="32"/>
        <end position="50"/>
    </location>
</feature>
<feature type="transmembrane region" description="Helical; Name=2" evidence="3">
    <location>
        <begin position="51"/>
        <end position="71"/>
    </location>
</feature>
<feature type="topological domain" description="Extracellular" evidence="3">
    <location>
        <begin position="72"/>
        <end position="100"/>
    </location>
</feature>
<feature type="transmembrane region" description="Helical; Name=3" evidence="3">
    <location>
        <begin position="101"/>
        <end position="121"/>
    </location>
</feature>
<feature type="topological domain" description="Cytoplasmic" evidence="3">
    <location>
        <begin position="122"/>
        <end position="144"/>
    </location>
</feature>
<feature type="transmembrane region" description="Helical; Name=4" evidence="3">
    <location>
        <begin position="145"/>
        <end position="165"/>
    </location>
</feature>
<feature type="topological domain" description="Extracellular" evidence="3">
    <location>
        <begin position="166"/>
        <end position="188"/>
    </location>
</feature>
<feature type="transmembrane region" description="Helical; Name=5" evidence="3">
    <location>
        <begin position="189"/>
        <end position="209"/>
    </location>
</feature>
<feature type="topological domain" description="Cytoplasmic" evidence="3">
    <location>
        <begin position="210"/>
        <end position="305"/>
    </location>
</feature>
<feature type="transmembrane region" description="Helical; Name=6" evidence="3">
    <location>
        <begin position="306"/>
        <end position="326"/>
    </location>
</feature>
<feature type="topological domain" description="Extracellular" evidence="3">
    <location>
        <begin position="327"/>
        <end position="364"/>
    </location>
</feature>
<feature type="transmembrane region" description="Helical; Name=7" evidence="3">
    <location>
        <begin position="365"/>
        <end position="385"/>
    </location>
</feature>
<feature type="topological domain" description="Cytoplasmic" evidence="3">
    <location>
        <begin position="386"/>
        <end position="408"/>
    </location>
</feature>
<feature type="transmembrane region" description="Helical; Name=8" evidence="3">
    <location>
        <begin position="409"/>
        <end position="429"/>
    </location>
</feature>
<feature type="topological domain" description="Extracellular" evidence="3">
    <location>
        <begin position="430"/>
        <end position="486"/>
    </location>
</feature>
<feature type="transmembrane region" description="Helical; Name=9" evidence="3">
    <location>
        <begin position="487"/>
        <end position="507"/>
    </location>
</feature>
<feature type="topological domain" description="Cytoplasmic" evidence="3">
    <location>
        <begin position="508"/>
        <end position="540"/>
    </location>
</feature>
<feature type="short sequence motif" description="YERL motif; mediates interaction with adapter protein complex 2 and is essential for its function in clathrin-mediated endocytosis of INSR" evidence="1">
    <location>
        <begin position="232"/>
        <end position="235"/>
    </location>
</feature>
<feature type="short sequence motif" description="WTKF motif; mediates interaction with adapter protein complex 2 and is essential for its function in clathrin-mediated endocytosis of INSR" evidence="1">
    <location>
        <begin position="294"/>
        <end position="297"/>
    </location>
</feature>
<feature type="modified residue" description="Phosphothreonine" evidence="1">
    <location>
        <position position="238"/>
    </location>
</feature>
<feature type="modified residue" description="Phosphoserine" evidence="2">
    <location>
        <position position="528"/>
    </location>
</feature>
<feature type="modified residue" description="Phosphoserine" evidence="2">
    <location>
        <position position="531"/>
    </location>
</feature>
<feature type="glycosylation site" description="N-linked (GlcNAc...) asparagine" evidence="3">
    <location>
        <position position="78"/>
    </location>
</feature>
<feature type="glycosylation site" description="N-linked (GlcNAc...) asparagine" evidence="3">
    <location>
        <position position="88"/>
    </location>
</feature>
<feature type="glycosylation site" description="N-linked (GlcNAc...) asparagine" evidence="3">
    <location>
        <position position="170"/>
    </location>
</feature>
<feature type="glycosylation site" description="N-linked (GlcNAc...) asparagine" evidence="3">
    <location>
        <position position="347"/>
    </location>
</feature>
<feature type="glycosylation site" description="N-linked (GlcNAc...) asparagine" evidence="3">
    <location>
        <position position="448"/>
    </location>
</feature>
<feature type="glycosylation site" description="N-linked (GlcNAc...) asparagine" evidence="3">
    <location>
        <position position="457"/>
    </location>
</feature>
<accession>Q4R5E3</accession>
<dbReference type="EMBL" id="AB169601">
    <property type="protein sequence ID" value="BAE01682.1"/>
    <property type="molecule type" value="mRNA"/>
</dbReference>
<dbReference type="RefSeq" id="NP_001270189.1">
    <property type="nucleotide sequence ID" value="NM_001283260.1"/>
</dbReference>
<dbReference type="RefSeq" id="XP_045247027.1">
    <property type="nucleotide sequence ID" value="XM_045391092.2"/>
</dbReference>
<dbReference type="SMR" id="Q4R5E3"/>
<dbReference type="STRING" id="9541.ENSMFAP00000013197"/>
<dbReference type="GlyCosmos" id="Q4R5E3">
    <property type="glycosylation" value="6 sites, No reported glycans"/>
</dbReference>
<dbReference type="GeneID" id="101865499"/>
<dbReference type="VEuPathDB" id="HostDB:ENSMFAG00000028262"/>
<dbReference type="eggNOG" id="ENOG502QQ2T">
    <property type="taxonomic scope" value="Eukaryota"/>
</dbReference>
<dbReference type="OMA" id="FWAQFVF"/>
<dbReference type="Proteomes" id="UP000233100">
    <property type="component" value="Chromosome 4"/>
</dbReference>
<dbReference type="GO" id="GO:0045334">
    <property type="term" value="C:clathrin-coated endocytic vesicle"/>
    <property type="evidence" value="ECO:0000250"/>
    <property type="project" value="UniProtKB"/>
</dbReference>
<dbReference type="GO" id="GO:0030136">
    <property type="term" value="C:clathrin-coated vesicle"/>
    <property type="evidence" value="ECO:0000250"/>
    <property type="project" value="UniProtKB"/>
</dbReference>
<dbReference type="GO" id="GO:0005789">
    <property type="term" value="C:endoplasmic reticulum membrane"/>
    <property type="evidence" value="ECO:0000250"/>
    <property type="project" value="UniProtKB"/>
</dbReference>
<dbReference type="GO" id="GO:0005765">
    <property type="term" value="C:lysosomal membrane"/>
    <property type="evidence" value="ECO:0000250"/>
    <property type="project" value="UniProtKB"/>
</dbReference>
<dbReference type="GO" id="GO:0005886">
    <property type="term" value="C:plasma membrane"/>
    <property type="evidence" value="ECO:0000250"/>
    <property type="project" value="UniProtKB"/>
</dbReference>
<dbReference type="GO" id="GO:0035612">
    <property type="term" value="F:AP-2 adaptor complex binding"/>
    <property type="evidence" value="ECO:0000250"/>
    <property type="project" value="UniProtKB"/>
</dbReference>
<dbReference type="GO" id="GO:0032050">
    <property type="term" value="F:clathrin heavy chain binding"/>
    <property type="evidence" value="ECO:0000250"/>
    <property type="project" value="UniProtKB"/>
</dbReference>
<dbReference type="GO" id="GO:0031419">
    <property type="term" value="F:cobalamin binding"/>
    <property type="evidence" value="ECO:0007669"/>
    <property type="project" value="UniProtKB-KW"/>
</dbReference>
<dbReference type="GO" id="GO:0072583">
    <property type="term" value="P:clathrin-dependent endocytosis"/>
    <property type="evidence" value="ECO:0000250"/>
    <property type="project" value="UniProtKB"/>
</dbReference>
<dbReference type="GO" id="GO:0007369">
    <property type="term" value="P:gastrulation"/>
    <property type="evidence" value="ECO:0000250"/>
    <property type="project" value="UniProtKB"/>
</dbReference>
<dbReference type="GO" id="GO:0038016">
    <property type="term" value="P:insulin receptor internalization"/>
    <property type="evidence" value="ECO:0000250"/>
    <property type="project" value="UniProtKB"/>
</dbReference>
<dbReference type="GO" id="GO:0061462">
    <property type="term" value="P:protein localization to lysosome"/>
    <property type="evidence" value="ECO:0000250"/>
    <property type="project" value="UniProtKB"/>
</dbReference>
<dbReference type="InterPro" id="IPR050854">
    <property type="entry name" value="LMBD1_LysCbl_Transport"/>
</dbReference>
<dbReference type="InterPro" id="IPR006876">
    <property type="entry name" value="LMBR1-like_membr_prot"/>
</dbReference>
<dbReference type="PANTHER" id="PTHR16130:SF2">
    <property type="entry name" value="LYSOSOMAL COBALAMIN TRANSPORT ESCORT PROTEIN LMBD1"/>
    <property type="match status" value="1"/>
</dbReference>
<dbReference type="PANTHER" id="PTHR16130">
    <property type="entry name" value="LYSOSOMAL COBALAMIN TRANSPORTER-RELATED"/>
    <property type="match status" value="1"/>
</dbReference>
<dbReference type="Pfam" id="PF04791">
    <property type="entry name" value="LMBR1"/>
    <property type="match status" value="1"/>
</dbReference>
<reference key="1">
    <citation type="submission" date="2005-06" db="EMBL/GenBank/DDBJ databases">
        <title>DNA sequences of macaque genes expressed in brain or testis and its evolutionary implications.</title>
        <authorList>
            <consortium name="International consortium for macaque cDNA sequencing and analysis"/>
        </authorList>
    </citation>
    <scope>NUCLEOTIDE SEQUENCE [LARGE SCALE MRNA]</scope>
    <source>
        <tissue>Parietal cortex</tissue>
    </source>
</reference>
<comment type="function">
    <text evidence="1 2">Lysosomal membrane chaperone required to export cobalamin (vitamin B12) from lysosome to the cytosol, allowing its conversion to cofactors. Targets ABCD4 transporter from the endoplasmic reticulum to the lysosomal membrane. Then forms a complex with lysosomal transporter ABCD4 and cytoplasmic MMACHC to transport cobalamin across the lysosomal membrane (By similarity). Acts as an adapter protein which plays an important role in mediating and regulating the internalization of the insulin receptor (INSR) (By similarity). Involved in clathrin-mediated endocytosis of INSR via its interaction with adapter protein complex 2 (By similarity). Essential for the initiation of gastrulation and early formation of mesoderm structures during embryogenesis (By similarity).</text>
</comment>
<comment type="subunit">
    <text evidence="1 2">Interacts with ABCD4; this interaction induces the translocation of ABCD4 from the endoplasmic reticulum to the lysosome. Interacts with ABCD4 and MMACHC; this interaction ensures the transport of cobalamin from the lysosome to the cytoplasm (By similarity). Interacts with INSR, adapter protein complex 2 and clathrin heavy chain (By similarity).</text>
</comment>
<comment type="subcellular location">
    <subcellularLocation>
        <location evidence="2">Lysosome membrane</location>
        <topology evidence="3">Multi-pass membrane protein</topology>
    </subcellularLocation>
    <subcellularLocation>
        <location evidence="1">Cell membrane</location>
        <topology evidence="3">Multi-pass membrane protein</topology>
    </subcellularLocation>
    <subcellularLocation>
        <location evidence="1">Cytoplasmic vesicle</location>
        <location evidence="1">Clathrin-coated vesicle</location>
    </subcellularLocation>
</comment>
<comment type="PTM">
    <text evidence="2">N-glycosylated.</text>
</comment>
<comment type="similarity">
    <text evidence="4">Belongs to the LIMR family. LMBRD1 subfamily.</text>
</comment>
<name>LMBD1_MACFA</name>
<evidence type="ECO:0000250" key="1">
    <source>
        <dbReference type="UniProtKB" id="Q8K0B2"/>
    </source>
</evidence>
<evidence type="ECO:0000250" key="2">
    <source>
        <dbReference type="UniProtKB" id="Q9NUN5"/>
    </source>
</evidence>
<evidence type="ECO:0000255" key="3"/>
<evidence type="ECO:0000305" key="4"/>